<sequence>MFGKKNLKWLGVVATLMMTFVQLGGALVTKTGSADGCGSSWPLCHGALIPEFFPIDTIIELSHRAVSALSLLMVLWLVITAWKHIGYIKEIKPLSIISVGFLLLQALIGAAAVIWQQNDYVLALHFGISLISFSSVFLITLIIFSIDQKYEADELYIKKPLRRLTWLMAIIIYCGVYTGALVRHADASLAYGGWPLPFHDLVPHSEQDWVQLTHRIMAFIVFTIIMITYIHAVKNYPNNRTVHYGYTAAFILVILQVITGALSIMTNVNLIIALFHALFITYLFGMTTYFIMLMLRSVRSDKQ</sequence>
<name>CTAA_STAA3</name>
<protein>
    <recommendedName>
        <fullName evidence="1">Heme A synthase</fullName>
        <shortName evidence="1">HAS</shortName>
        <ecNumber evidence="1">1.17.99.9</ecNumber>
    </recommendedName>
    <alternativeName>
        <fullName evidence="1">Cytochrome aa3-controlling protein</fullName>
    </alternativeName>
</protein>
<proteinExistence type="inferred from homology"/>
<keyword id="KW-1003">Cell membrane</keyword>
<keyword id="KW-1015">Disulfide bond</keyword>
<keyword id="KW-0350">Heme biosynthesis</keyword>
<keyword id="KW-0408">Iron</keyword>
<keyword id="KW-0472">Membrane</keyword>
<keyword id="KW-0479">Metal-binding</keyword>
<keyword id="KW-0560">Oxidoreductase</keyword>
<keyword id="KW-0812">Transmembrane</keyword>
<keyword id="KW-1133">Transmembrane helix</keyword>
<feature type="chain" id="PRO_0000349000" description="Heme A synthase">
    <location>
        <begin position="1"/>
        <end position="303"/>
    </location>
</feature>
<feature type="topological domain" description="Cytoplasmic" evidence="1">
    <location>
        <begin position="1"/>
        <end position="8"/>
    </location>
</feature>
<feature type="transmembrane region" description="Helical" evidence="1">
    <location>
        <begin position="9"/>
        <end position="29"/>
    </location>
</feature>
<feature type="topological domain" description="Extracellular" evidence="1">
    <location>
        <begin position="30"/>
        <end position="67"/>
    </location>
</feature>
<feature type="transmembrane region" description="Helical" evidence="1">
    <location>
        <begin position="68"/>
        <end position="88"/>
    </location>
</feature>
<feature type="topological domain" description="Cytoplasmic" evidence="1">
    <location>
        <begin position="89"/>
        <end position="93"/>
    </location>
</feature>
<feature type="transmembrane region" description="Helical" evidence="1">
    <location>
        <begin position="94"/>
        <end position="114"/>
    </location>
</feature>
<feature type="topological domain" description="Extracellular" evidence="1">
    <location>
        <begin position="115"/>
        <end position="125"/>
    </location>
</feature>
<feature type="transmembrane region" description="Helical" evidence="1">
    <location>
        <begin position="126"/>
        <end position="146"/>
    </location>
</feature>
<feature type="topological domain" description="Cytoplasmic" evidence="1">
    <location>
        <begin position="147"/>
        <end position="163"/>
    </location>
</feature>
<feature type="transmembrane region" description="Helical" evidence="1">
    <location>
        <begin position="164"/>
        <end position="184"/>
    </location>
</feature>
<feature type="topological domain" description="Extracellular" evidence="1">
    <location>
        <begin position="185"/>
        <end position="215"/>
    </location>
</feature>
<feature type="transmembrane region" description="Helical" evidence="1">
    <location>
        <begin position="216"/>
        <end position="236"/>
    </location>
</feature>
<feature type="topological domain" description="Cytoplasmic" evidence="1">
    <location>
        <begin position="237"/>
        <end position="244"/>
    </location>
</feature>
<feature type="transmembrane region" description="Helical" evidence="1">
    <location>
        <begin position="245"/>
        <end position="265"/>
    </location>
</feature>
<feature type="topological domain" description="Extracellular" evidence="1">
    <location>
        <begin position="266"/>
        <end position="270"/>
    </location>
</feature>
<feature type="transmembrane region" description="Helical" evidence="1">
    <location>
        <begin position="271"/>
        <end position="291"/>
    </location>
</feature>
<feature type="topological domain" description="Cytoplasmic" evidence="1">
    <location>
        <begin position="292"/>
        <end position="303"/>
    </location>
</feature>
<feature type="active site" evidence="1">
    <location>
        <position position="60"/>
    </location>
</feature>
<feature type="binding site" description="axial binding residue" evidence="1">
    <location>
        <position position="63"/>
    </location>
    <ligand>
        <name>heme o</name>
        <dbReference type="ChEBI" id="CHEBI:24480"/>
    </ligand>
    <ligandPart>
        <name>Fe</name>
        <dbReference type="ChEBI" id="CHEBI:18248"/>
    </ligandPart>
</feature>
<feature type="binding site" description="axial binding residue" evidence="1">
    <location>
        <position position="125"/>
    </location>
    <ligand>
        <name>heme o</name>
        <dbReference type="ChEBI" id="CHEBI:24480"/>
    </ligand>
    <ligandPart>
        <name>Fe</name>
        <dbReference type="ChEBI" id="CHEBI:18248"/>
    </ligandPart>
</feature>
<feature type="binding site" description="axial binding residue" evidence="1">
    <location>
        <position position="214"/>
    </location>
    <ligand>
        <name>heme b</name>
        <dbReference type="ChEBI" id="CHEBI:60344"/>
    </ligand>
    <ligandPart>
        <name>Fe</name>
        <dbReference type="ChEBI" id="CHEBI:18248"/>
    </ligandPart>
</feature>
<feature type="binding site" description="axial binding residue" evidence="1">
    <location>
        <position position="276"/>
    </location>
    <ligand>
        <name>heme b</name>
        <dbReference type="ChEBI" id="CHEBI:60344"/>
    </ligand>
    <ligandPart>
        <name>Fe</name>
        <dbReference type="ChEBI" id="CHEBI:18248"/>
    </ligandPart>
</feature>
<feature type="disulfide bond" description="Essential for catalytic activity" evidence="1">
    <location>
        <begin position="37"/>
        <end position="44"/>
    </location>
</feature>
<dbReference type="EC" id="1.17.99.9" evidence="1"/>
<dbReference type="EMBL" id="CP000255">
    <property type="protein sequence ID" value="ABD21616.1"/>
    <property type="status" value="ALT_INIT"/>
    <property type="molecule type" value="Genomic_DNA"/>
</dbReference>
<dbReference type="RefSeq" id="WP_000467123.1">
    <property type="nucleotide sequence ID" value="NZ_CP027476.1"/>
</dbReference>
<dbReference type="SMR" id="Q2FHW5"/>
<dbReference type="KEGG" id="saa:SAUSA300_1015"/>
<dbReference type="HOGENOM" id="CLU_041525_3_1_9"/>
<dbReference type="UniPathway" id="UPA00269">
    <property type="reaction ID" value="UER00713"/>
</dbReference>
<dbReference type="Proteomes" id="UP000001939">
    <property type="component" value="Chromosome"/>
</dbReference>
<dbReference type="GO" id="GO:0005886">
    <property type="term" value="C:plasma membrane"/>
    <property type="evidence" value="ECO:0007669"/>
    <property type="project" value="UniProtKB-SubCell"/>
</dbReference>
<dbReference type="GO" id="GO:0046872">
    <property type="term" value="F:metal ion binding"/>
    <property type="evidence" value="ECO:0007669"/>
    <property type="project" value="UniProtKB-KW"/>
</dbReference>
<dbReference type="GO" id="GO:0016653">
    <property type="term" value="F:oxidoreductase activity, acting on NAD(P)H, heme protein as acceptor"/>
    <property type="evidence" value="ECO:0007669"/>
    <property type="project" value="InterPro"/>
</dbReference>
<dbReference type="GO" id="GO:0006784">
    <property type="term" value="P:heme A biosynthetic process"/>
    <property type="evidence" value="ECO:0007669"/>
    <property type="project" value="UniProtKB-UniRule"/>
</dbReference>
<dbReference type="HAMAP" id="MF_01664">
    <property type="entry name" value="HemeA_synth_type1"/>
    <property type="match status" value="1"/>
</dbReference>
<dbReference type="InterPro" id="IPR003780">
    <property type="entry name" value="COX15/CtaA_fam"/>
</dbReference>
<dbReference type="InterPro" id="IPR050450">
    <property type="entry name" value="COX15/CtaA_HemeA_synthase"/>
</dbReference>
<dbReference type="InterPro" id="IPR023755">
    <property type="entry name" value="HemeA_Synthase_type1"/>
</dbReference>
<dbReference type="PANTHER" id="PTHR35457">
    <property type="entry name" value="HEME A SYNTHASE"/>
    <property type="match status" value="1"/>
</dbReference>
<dbReference type="PANTHER" id="PTHR35457:SF1">
    <property type="entry name" value="HEME A SYNTHASE"/>
    <property type="match status" value="1"/>
</dbReference>
<dbReference type="Pfam" id="PF02628">
    <property type="entry name" value="COX15-CtaA"/>
    <property type="match status" value="1"/>
</dbReference>
<reference key="1">
    <citation type="journal article" date="2006" name="Lancet">
        <title>Complete genome sequence of USA300, an epidemic clone of community-acquired meticillin-resistant Staphylococcus aureus.</title>
        <authorList>
            <person name="Diep B.A."/>
            <person name="Gill S.R."/>
            <person name="Chang R.F."/>
            <person name="Phan T.H."/>
            <person name="Chen J.H."/>
            <person name="Davidson M.G."/>
            <person name="Lin F."/>
            <person name="Lin J."/>
            <person name="Carleton H.A."/>
            <person name="Mongodin E.F."/>
            <person name="Sensabaugh G.F."/>
            <person name="Perdreau-Remington F."/>
        </authorList>
    </citation>
    <scope>NUCLEOTIDE SEQUENCE [LARGE SCALE GENOMIC DNA]</scope>
    <source>
        <strain>USA300</strain>
    </source>
</reference>
<comment type="function">
    <text evidence="1">Catalyzes the conversion of heme O to heme A by two successive hydroxylations of the methyl group at C8. The first hydroxylation forms heme I, the second hydroxylation results in an unstable dihydroxymethyl group, which spontaneously dehydrates, resulting in the formyl group of heme A.</text>
</comment>
<comment type="catalytic activity">
    <reaction evidence="1">
        <text>Fe(II)-heme o + 2 A + H2O = Fe(II)-heme a + 2 AH2</text>
        <dbReference type="Rhea" id="RHEA:63388"/>
        <dbReference type="ChEBI" id="CHEBI:13193"/>
        <dbReference type="ChEBI" id="CHEBI:15377"/>
        <dbReference type="ChEBI" id="CHEBI:17499"/>
        <dbReference type="ChEBI" id="CHEBI:60530"/>
        <dbReference type="ChEBI" id="CHEBI:61715"/>
        <dbReference type="EC" id="1.17.99.9"/>
    </reaction>
    <physiologicalReaction direction="left-to-right" evidence="1">
        <dbReference type="Rhea" id="RHEA:63389"/>
    </physiologicalReaction>
</comment>
<comment type="cofactor">
    <cofactor evidence="1">
        <name>heme b</name>
        <dbReference type="ChEBI" id="CHEBI:60344"/>
    </cofactor>
</comment>
<comment type="pathway">
    <text evidence="1">Porphyrin-containing compound metabolism; heme A biosynthesis; heme A from heme O: step 1/1.</text>
</comment>
<comment type="subunit">
    <text evidence="1">Interacts with CtaB.</text>
</comment>
<comment type="subcellular location">
    <subcellularLocation>
        <location evidence="1">Cell membrane</location>
        <topology evidence="1">Multi-pass membrane protein</topology>
    </subcellularLocation>
</comment>
<comment type="domain">
    <text evidence="1">The N-half (TM1-TM4) and C-half (TM5-TM8) domains are connected by an intracellular loop. Each domain is formed from four-helix bundles and they align in a pseudo twofold symmetry manner. The N-half domain is the substrate-heme O binding domain and the C-half domain is the cofactor heme B binding domain.</text>
</comment>
<comment type="domain">
    <text evidence="1">The cysteines of disulfide bond Cys-37 and Cys-44 may be involved in transfer of reducing equivalents from quinol in the membrane to the active site of the enzyme.</text>
</comment>
<comment type="similarity">
    <text evidence="1">Belongs to the COX15/CtaA family. Type 1 subfamily.</text>
</comment>
<comment type="sequence caution" evidence="2">
    <conflict type="erroneous initiation">
        <sequence resource="EMBL-CDS" id="ABD21616"/>
    </conflict>
</comment>
<evidence type="ECO:0000255" key="1">
    <source>
        <dbReference type="HAMAP-Rule" id="MF_01664"/>
    </source>
</evidence>
<evidence type="ECO:0000305" key="2"/>
<accession>Q2FHW5</accession>
<gene>
    <name evidence="1" type="primary">ctaA</name>
    <name type="ordered locus">SAUSA300_1015</name>
</gene>
<organism>
    <name type="scientific">Staphylococcus aureus (strain USA300)</name>
    <dbReference type="NCBI Taxonomy" id="367830"/>
    <lineage>
        <taxon>Bacteria</taxon>
        <taxon>Bacillati</taxon>
        <taxon>Bacillota</taxon>
        <taxon>Bacilli</taxon>
        <taxon>Bacillales</taxon>
        <taxon>Staphylococcaceae</taxon>
        <taxon>Staphylococcus</taxon>
    </lineage>
</organism>